<comment type="function">
    <text evidence="1">Catalyzes the ATP-dependent amidation of the two carboxylate groups at positions a and c of hydrogenobyrinate, using either L-glutamine or ammonia as the nitrogen source.</text>
</comment>
<comment type="catalytic activity">
    <reaction evidence="1">
        <text>hydrogenobyrinate + 2 L-glutamine + 2 ATP + 2 H2O = hydrogenobyrinate a,c-diamide + 2 L-glutamate + 2 ADP + 2 phosphate + 2 H(+)</text>
        <dbReference type="Rhea" id="RHEA:12544"/>
        <dbReference type="ChEBI" id="CHEBI:15377"/>
        <dbReference type="ChEBI" id="CHEBI:15378"/>
        <dbReference type="ChEBI" id="CHEBI:29985"/>
        <dbReference type="ChEBI" id="CHEBI:30616"/>
        <dbReference type="ChEBI" id="CHEBI:43474"/>
        <dbReference type="ChEBI" id="CHEBI:58359"/>
        <dbReference type="ChEBI" id="CHEBI:77873"/>
        <dbReference type="ChEBI" id="CHEBI:77874"/>
        <dbReference type="ChEBI" id="CHEBI:456216"/>
        <dbReference type="EC" id="6.3.5.9"/>
    </reaction>
</comment>
<comment type="cofactor">
    <cofactor evidence="1">
        <name>Mg(2+)</name>
        <dbReference type="ChEBI" id="CHEBI:18420"/>
    </cofactor>
</comment>
<comment type="pathway">
    <text evidence="1">Cofactor biosynthesis; adenosylcobalamin biosynthesis; cob(II)yrinate a,c-diamide from precorrin-2 (aerobic route): step 9/10.</text>
</comment>
<comment type="domain">
    <text evidence="1">Comprises of two domains. The C-terminal domain contains the binding site for glutamine and catalyzes the hydrolysis of this substrate to glutamate and ammonia. The N-terminal domain is anticipated to bind ATP and hydrogenobyrinate and catalyzes the ultimate synthesis of the diamide product. The ammonia produced via the glutaminase domain is probably translocated to the adjacent domain via a molecular tunnel, where it reacts with an activated intermediate.</text>
</comment>
<comment type="miscellaneous">
    <text evidence="1">The a and c carboxylates of hydrogenobyrinate are activated for nucleophilic attack via formation of a phosphorylated intermediate by ATP. CobB catalyzes first the amidation of the c-carboxylate, and then that of the a-carboxylate.</text>
</comment>
<comment type="similarity">
    <text evidence="1">Belongs to the CobB/CbiA family.</text>
</comment>
<accession>Q8G020</accession>
<accession>G0KAQ5</accession>
<feature type="chain" id="PRO_0000141256" description="Hydrogenobyrinate a,c-diamide synthase">
    <location>
        <begin position="1"/>
        <end position="436"/>
    </location>
</feature>
<feature type="domain" description="GATase cobBQ-type" evidence="1">
    <location>
        <begin position="244"/>
        <end position="435"/>
    </location>
</feature>
<feature type="active site" description="Nucleophile" evidence="1">
    <location>
        <position position="327"/>
    </location>
</feature>
<feature type="site" description="Increases nucleophilicity of active site Cys" evidence="1">
    <location>
        <position position="427"/>
    </location>
</feature>
<organism>
    <name type="scientific">Brucella suis biovar 1 (strain 1330)</name>
    <dbReference type="NCBI Taxonomy" id="204722"/>
    <lineage>
        <taxon>Bacteria</taxon>
        <taxon>Pseudomonadati</taxon>
        <taxon>Pseudomonadota</taxon>
        <taxon>Alphaproteobacteria</taxon>
        <taxon>Hyphomicrobiales</taxon>
        <taxon>Brucellaceae</taxon>
        <taxon>Brucella/Ochrobactrum group</taxon>
        <taxon>Brucella</taxon>
    </lineage>
</organism>
<evidence type="ECO:0000255" key="1">
    <source>
        <dbReference type="HAMAP-Rule" id="MF_00027"/>
    </source>
</evidence>
<dbReference type="EC" id="6.3.5.9" evidence="1"/>
<dbReference type="EMBL" id="AE014291">
    <property type="protein sequence ID" value="AAN30214.1"/>
    <property type="molecule type" value="Genomic_DNA"/>
</dbReference>
<dbReference type="EMBL" id="CP002997">
    <property type="protein sequence ID" value="AEM18632.1"/>
    <property type="molecule type" value="Genomic_DNA"/>
</dbReference>
<dbReference type="RefSeq" id="WP_006190531.1">
    <property type="nucleotide sequence ID" value="NZ_KN046804.1"/>
</dbReference>
<dbReference type="SMR" id="Q8G020"/>
<dbReference type="GeneID" id="45052325"/>
<dbReference type="KEGG" id="bms:BR1296"/>
<dbReference type="KEGG" id="bsi:BS1330_I1292"/>
<dbReference type="PATRIC" id="fig|204722.22.peg.258"/>
<dbReference type="HOGENOM" id="CLU_022752_0_0_5"/>
<dbReference type="PhylomeDB" id="Q8G020"/>
<dbReference type="UniPathway" id="UPA00148">
    <property type="reaction ID" value="UER00220"/>
</dbReference>
<dbReference type="PRO" id="PR:Q8G020"/>
<dbReference type="Proteomes" id="UP000007104">
    <property type="component" value="Chromosome I"/>
</dbReference>
<dbReference type="GO" id="GO:0005524">
    <property type="term" value="F:ATP binding"/>
    <property type="evidence" value="ECO:0007669"/>
    <property type="project" value="UniProtKB-UniRule"/>
</dbReference>
<dbReference type="GO" id="GO:0042242">
    <property type="term" value="F:cobyrinic acid a,c-diamide synthase activity"/>
    <property type="evidence" value="ECO:0007669"/>
    <property type="project" value="InterPro"/>
</dbReference>
<dbReference type="GO" id="GO:0043802">
    <property type="term" value="F:hydrogenobyrinic acid a,c-diamide synthase (glutamine-hydrolysing) activity"/>
    <property type="evidence" value="ECO:0007669"/>
    <property type="project" value="UniProtKB-UniRule"/>
</dbReference>
<dbReference type="GO" id="GO:0009236">
    <property type="term" value="P:cobalamin biosynthetic process"/>
    <property type="evidence" value="ECO:0007669"/>
    <property type="project" value="UniProtKB-UniRule"/>
</dbReference>
<dbReference type="Gene3D" id="3.40.50.880">
    <property type="match status" value="1"/>
</dbReference>
<dbReference type="Gene3D" id="3.40.50.300">
    <property type="entry name" value="P-loop containing nucleotide triphosphate hydrolases"/>
    <property type="match status" value="2"/>
</dbReference>
<dbReference type="HAMAP" id="MF_00027">
    <property type="entry name" value="CobB_CbiA"/>
    <property type="match status" value="1"/>
</dbReference>
<dbReference type="InterPro" id="IPR004484">
    <property type="entry name" value="CbiA/CobB_synth"/>
</dbReference>
<dbReference type="InterPro" id="IPR029062">
    <property type="entry name" value="Class_I_gatase-like"/>
</dbReference>
<dbReference type="InterPro" id="IPR002586">
    <property type="entry name" value="CobQ/CobB/MinD/ParA_Nub-bd_dom"/>
</dbReference>
<dbReference type="InterPro" id="IPR011698">
    <property type="entry name" value="GATase_3"/>
</dbReference>
<dbReference type="InterPro" id="IPR027417">
    <property type="entry name" value="P-loop_NTPase"/>
</dbReference>
<dbReference type="NCBIfam" id="TIGR00379">
    <property type="entry name" value="cobB"/>
    <property type="match status" value="1"/>
</dbReference>
<dbReference type="NCBIfam" id="NF002204">
    <property type="entry name" value="PRK01077.1"/>
    <property type="match status" value="1"/>
</dbReference>
<dbReference type="PANTHER" id="PTHR43873">
    <property type="entry name" value="COBYRINATE A,C-DIAMIDE SYNTHASE"/>
    <property type="match status" value="1"/>
</dbReference>
<dbReference type="PANTHER" id="PTHR43873:SF1">
    <property type="entry name" value="COBYRINATE A,C-DIAMIDE SYNTHASE"/>
    <property type="match status" value="1"/>
</dbReference>
<dbReference type="Pfam" id="PF01656">
    <property type="entry name" value="CbiA"/>
    <property type="match status" value="1"/>
</dbReference>
<dbReference type="Pfam" id="PF07685">
    <property type="entry name" value="GATase_3"/>
    <property type="match status" value="1"/>
</dbReference>
<dbReference type="SUPFAM" id="SSF52317">
    <property type="entry name" value="Class I glutamine amidotransferase-like"/>
    <property type="match status" value="1"/>
</dbReference>
<dbReference type="SUPFAM" id="SSF52540">
    <property type="entry name" value="P-loop containing nucleoside triphosphate hydrolases"/>
    <property type="match status" value="1"/>
</dbReference>
<dbReference type="PROSITE" id="PS51274">
    <property type="entry name" value="GATASE_COBBQ"/>
    <property type="match status" value="1"/>
</dbReference>
<name>COBB_BRUSU</name>
<reference key="1">
    <citation type="journal article" date="2002" name="Proc. Natl. Acad. Sci. U.S.A.">
        <title>The Brucella suis genome reveals fundamental similarities between animal and plant pathogens and symbionts.</title>
        <authorList>
            <person name="Paulsen I.T."/>
            <person name="Seshadri R."/>
            <person name="Nelson K.E."/>
            <person name="Eisen J.A."/>
            <person name="Heidelberg J.F."/>
            <person name="Read T.D."/>
            <person name="Dodson R.J."/>
            <person name="Umayam L.A."/>
            <person name="Brinkac L.M."/>
            <person name="Beanan M.J."/>
            <person name="Daugherty S.C."/>
            <person name="DeBoy R.T."/>
            <person name="Durkin A.S."/>
            <person name="Kolonay J.F."/>
            <person name="Madupu R."/>
            <person name="Nelson W.C."/>
            <person name="Ayodeji B."/>
            <person name="Kraul M."/>
            <person name="Shetty J."/>
            <person name="Malek J.A."/>
            <person name="Van Aken S.E."/>
            <person name="Riedmuller S."/>
            <person name="Tettelin H."/>
            <person name="Gill S.R."/>
            <person name="White O."/>
            <person name="Salzberg S.L."/>
            <person name="Hoover D.L."/>
            <person name="Lindler L.E."/>
            <person name="Halling S.M."/>
            <person name="Boyle S.M."/>
            <person name="Fraser C.M."/>
        </authorList>
    </citation>
    <scope>NUCLEOTIDE SEQUENCE [LARGE SCALE GENOMIC DNA]</scope>
    <source>
        <strain>1330</strain>
    </source>
</reference>
<reference key="2">
    <citation type="journal article" date="2011" name="J. Bacteriol.">
        <title>Revised genome sequence of Brucella suis 1330.</title>
        <authorList>
            <person name="Tae H."/>
            <person name="Shallom S."/>
            <person name="Settlage R."/>
            <person name="Preston D."/>
            <person name="Adams L.G."/>
            <person name="Garner H.R."/>
        </authorList>
    </citation>
    <scope>NUCLEOTIDE SEQUENCE [LARGE SCALE GENOMIC DNA]</scope>
    <source>
        <strain>1330</strain>
    </source>
</reference>
<proteinExistence type="inferred from homology"/>
<sequence>MKGFMIAAPASGSGKTTVTLGLLRALKRRGEVLAPVKAGPDYIDPAYHRAASGVDCFNLDPWAMRPGLISALSSRMTESGARVLVAEGMMGLFDGAIDGKGSSADLARLLDLPVVLVVDCARQSHSIAALVWGFSQFRKDVLIEGVILNRVGSPRHEAMLRGALAPLGVPVLGALPRDPALSLPERHLGLVQADEHAGLESFLEQAADVMEAHIDMDALQTIWLRPKRYDAMANVARLKPLGNRIAVARDDAFAFAYMHLFEGWRRRGAEISFFSPLADEAPKADADAIYLPGGYPELHAQRLAGASRFRTAIGDAAARGVTVYGECGGYMVLGKTLEDAAGVHHPMLGLLPLETSFARRKLHLGYRLLEPLGGLPWDMPLKAHEFHYASIVREEKADRLFRVRDASGENLGEAGLRVGSVSGSFMHVIDFSGEAA</sequence>
<gene>
    <name evidence="1" type="primary">cobB</name>
    <name type="ordered locus">BR1296</name>
    <name type="ordered locus">BS1330_I1292</name>
</gene>
<keyword id="KW-0067">ATP-binding</keyword>
<keyword id="KW-0169">Cobalamin biosynthesis</keyword>
<keyword id="KW-0315">Glutamine amidotransferase</keyword>
<keyword id="KW-0436">Ligase</keyword>
<keyword id="KW-0460">Magnesium</keyword>
<keyword id="KW-0547">Nucleotide-binding</keyword>
<protein>
    <recommendedName>
        <fullName evidence="1">Hydrogenobyrinate a,c-diamide synthase</fullName>
        <ecNumber evidence="1">6.3.5.9</ecNumber>
    </recommendedName>
    <alternativeName>
        <fullName evidence="1">Hydrogenobyrinic acid a,c-diamide synthase</fullName>
    </alternativeName>
</protein>